<proteinExistence type="inferred from homology"/>
<organism>
    <name type="scientific">Cyanothece sp. (strain PCC 7425 / ATCC 29141)</name>
    <dbReference type="NCBI Taxonomy" id="395961"/>
    <lineage>
        <taxon>Bacteria</taxon>
        <taxon>Bacillati</taxon>
        <taxon>Cyanobacteriota</taxon>
        <taxon>Cyanophyceae</taxon>
        <taxon>Gomontiellales</taxon>
        <taxon>Cyanothecaceae</taxon>
        <taxon>Cyanothece</taxon>
    </lineage>
</organism>
<dbReference type="EC" id="2.5.1.141" evidence="1"/>
<dbReference type="EMBL" id="CP001344">
    <property type="protein sequence ID" value="ACL43588.1"/>
    <property type="molecule type" value="Genomic_DNA"/>
</dbReference>
<dbReference type="SMR" id="B8HMH3"/>
<dbReference type="STRING" id="395961.Cyan7425_1209"/>
<dbReference type="KEGG" id="cyn:Cyan7425_1209"/>
<dbReference type="eggNOG" id="COG0109">
    <property type="taxonomic scope" value="Bacteria"/>
</dbReference>
<dbReference type="HOGENOM" id="CLU_029631_0_2_3"/>
<dbReference type="OrthoDB" id="9814417at2"/>
<dbReference type="UniPathway" id="UPA00834">
    <property type="reaction ID" value="UER00712"/>
</dbReference>
<dbReference type="GO" id="GO:0005886">
    <property type="term" value="C:plasma membrane"/>
    <property type="evidence" value="ECO:0007669"/>
    <property type="project" value="UniProtKB-SubCell"/>
</dbReference>
<dbReference type="GO" id="GO:0008495">
    <property type="term" value="F:protoheme IX farnesyltransferase activity"/>
    <property type="evidence" value="ECO:0007669"/>
    <property type="project" value="UniProtKB-UniRule"/>
</dbReference>
<dbReference type="GO" id="GO:0048034">
    <property type="term" value="P:heme O biosynthetic process"/>
    <property type="evidence" value="ECO:0007669"/>
    <property type="project" value="UniProtKB-UniRule"/>
</dbReference>
<dbReference type="CDD" id="cd13957">
    <property type="entry name" value="PT_UbiA_Cox10"/>
    <property type="match status" value="1"/>
</dbReference>
<dbReference type="FunFam" id="1.10.357.140:FF:000001">
    <property type="entry name" value="Protoheme IX farnesyltransferase"/>
    <property type="match status" value="1"/>
</dbReference>
<dbReference type="Gene3D" id="1.10.357.140">
    <property type="entry name" value="UbiA prenyltransferase"/>
    <property type="match status" value="1"/>
</dbReference>
<dbReference type="HAMAP" id="MF_00154">
    <property type="entry name" value="CyoE_CtaB"/>
    <property type="match status" value="1"/>
</dbReference>
<dbReference type="InterPro" id="IPR006369">
    <property type="entry name" value="Protohaem_IX_farnesylTrfase"/>
</dbReference>
<dbReference type="InterPro" id="IPR000537">
    <property type="entry name" value="UbiA_prenyltransferase"/>
</dbReference>
<dbReference type="InterPro" id="IPR030470">
    <property type="entry name" value="UbiA_prenylTrfase_CS"/>
</dbReference>
<dbReference type="InterPro" id="IPR044878">
    <property type="entry name" value="UbiA_sf"/>
</dbReference>
<dbReference type="NCBIfam" id="TIGR01473">
    <property type="entry name" value="cyoE_ctaB"/>
    <property type="match status" value="1"/>
</dbReference>
<dbReference type="NCBIfam" id="NF003349">
    <property type="entry name" value="PRK04375.1-2"/>
    <property type="match status" value="1"/>
</dbReference>
<dbReference type="PANTHER" id="PTHR43448:SF7">
    <property type="entry name" value="4-HYDROXYBENZOATE SOLANESYLTRANSFERASE"/>
    <property type="match status" value="1"/>
</dbReference>
<dbReference type="PANTHER" id="PTHR43448">
    <property type="entry name" value="PROTOHEME IX FARNESYLTRANSFERASE, MITOCHONDRIAL"/>
    <property type="match status" value="1"/>
</dbReference>
<dbReference type="Pfam" id="PF01040">
    <property type="entry name" value="UbiA"/>
    <property type="match status" value="1"/>
</dbReference>
<dbReference type="PROSITE" id="PS00943">
    <property type="entry name" value="UBIA"/>
    <property type="match status" value="1"/>
</dbReference>
<protein>
    <recommendedName>
        <fullName evidence="1">Protoheme IX farnesyltransferase</fullName>
        <ecNumber evidence="1">2.5.1.141</ecNumber>
    </recommendedName>
    <alternativeName>
        <fullName evidence="1">Heme B farnesyltransferase</fullName>
    </alternativeName>
    <alternativeName>
        <fullName evidence="1">Heme O synthase</fullName>
    </alternativeName>
</protein>
<comment type="function">
    <text evidence="1">Converts heme B (protoheme IX) to heme O by substitution of the vinyl group on carbon 2 of heme B porphyrin ring with a hydroxyethyl farnesyl side group.</text>
</comment>
<comment type="catalytic activity">
    <reaction evidence="1">
        <text>heme b + (2E,6E)-farnesyl diphosphate + H2O = Fe(II)-heme o + diphosphate</text>
        <dbReference type="Rhea" id="RHEA:28070"/>
        <dbReference type="ChEBI" id="CHEBI:15377"/>
        <dbReference type="ChEBI" id="CHEBI:33019"/>
        <dbReference type="ChEBI" id="CHEBI:60344"/>
        <dbReference type="ChEBI" id="CHEBI:60530"/>
        <dbReference type="ChEBI" id="CHEBI:175763"/>
        <dbReference type="EC" id="2.5.1.141"/>
    </reaction>
</comment>
<comment type="pathway">
    <text evidence="1">Porphyrin-containing compound metabolism; heme O biosynthesis; heme O from protoheme: step 1/1.</text>
</comment>
<comment type="subcellular location">
    <subcellularLocation>
        <location evidence="1">Cell inner membrane</location>
        <topology evidence="1">Multi-pass membrane protein</topology>
    </subcellularLocation>
</comment>
<comment type="miscellaneous">
    <text evidence="1">Carbon 2 of the heme B porphyrin ring is defined according to the Fischer nomenclature.</text>
</comment>
<comment type="similarity">
    <text evidence="1">Belongs to the UbiA prenyltransferase family. Protoheme IX farnesyltransferase subfamily.</text>
</comment>
<gene>
    <name evidence="1" type="primary">ctaB</name>
    <name type="ordered locus">Cyan7425_1209</name>
</gene>
<name>COXX_CYAP4</name>
<evidence type="ECO:0000255" key="1">
    <source>
        <dbReference type="HAMAP-Rule" id="MF_00154"/>
    </source>
</evidence>
<reference key="1">
    <citation type="journal article" date="2011" name="MBio">
        <title>Novel metabolic attributes of the genus Cyanothece, comprising a group of unicellular nitrogen-fixing Cyanobacteria.</title>
        <authorList>
            <person name="Bandyopadhyay A."/>
            <person name="Elvitigala T."/>
            <person name="Welsh E."/>
            <person name="Stockel J."/>
            <person name="Liberton M."/>
            <person name="Min H."/>
            <person name="Sherman L.A."/>
            <person name="Pakrasi H.B."/>
        </authorList>
    </citation>
    <scope>NUCLEOTIDE SEQUENCE [LARGE SCALE GENOMIC DNA]</scope>
    <source>
        <strain>PCC 7425 / ATCC 29141</strain>
    </source>
</reference>
<feature type="chain" id="PRO_1000199649" description="Protoheme IX farnesyltransferase">
    <location>
        <begin position="1"/>
        <end position="324"/>
    </location>
</feature>
<feature type="transmembrane region" description="Helical" evidence="1">
    <location>
        <begin position="31"/>
        <end position="51"/>
    </location>
</feature>
<feature type="transmembrane region" description="Helical" evidence="1">
    <location>
        <begin position="53"/>
        <end position="73"/>
    </location>
</feature>
<feature type="transmembrane region" description="Helical" evidence="1">
    <location>
        <begin position="104"/>
        <end position="124"/>
    </location>
</feature>
<feature type="transmembrane region" description="Helical" evidence="1">
    <location>
        <begin position="125"/>
        <end position="145"/>
    </location>
</feature>
<feature type="transmembrane region" description="Helical" evidence="1">
    <location>
        <begin position="153"/>
        <end position="173"/>
    </location>
</feature>
<feature type="transmembrane region" description="Helical" evidence="1">
    <location>
        <begin position="181"/>
        <end position="201"/>
    </location>
</feature>
<feature type="transmembrane region" description="Helical" evidence="1">
    <location>
        <begin position="222"/>
        <end position="242"/>
    </location>
</feature>
<feature type="transmembrane region" description="Helical" evidence="1">
    <location>
        <begin position="243"/>
        <end position="263"/>
    </location>
</feature>
<feature type="transmembrane region" description="Helical" evidence="1">
    <location>
        <begin position="285"/>
        <end position="305"/>
    </location>
</feature>
<sequence>MQETSLTKAVSPRQSLGQILLNYYQLTKPRLIVLFLITTAAGMWVAARGEVDPVLALITLLTGAMAAGSANTINCLYDRDIDYIMERTRHRPLPSGRVQPWEALVFAIALAVGAFSLQTLCANLLSACLEMAGIAVYVGVYTHWLKRSSTQNIVIGGAAGAIPPLVGWAAVTGELSWAAWVLFAIIFIWTPPHFWPLAMLIQEDYAKVNVPMMPVVDGDRPTAWQIFGYTLVLLPTTLLLVYPLHACGLIYGAIALVLGVVFIRKAWELVQTPEDKDQARAVFKFSILYMMILCAAMGIDSLPLTHAVVSQVTANLQTLVGTIL</sequence>
<accession>B8HMH3</accession>
<keyword id="KW-0997">Cell inner membrane</keyword>
<keyword id="KW-1003">Cell membrane</keyword>
<keyword id="KW-0350">Heme biosynthesis</keyword>
<keyword id="KW-0472">Membrane</keyword>
<keyword id="KW-0808">Transferase</keyword>
<keyword id="KW-0812">Transmembrane</keyword>
<keyword id="KW-1133">Transmembrane helix</keyword>